<organism>
    <name type="scientific">Mycobacterium tuberculosis (strain ATCC 25618 / H37Rv)</name>
    <dbReference type="NCBI Taxonomy" id="83332"/>
    <lineage>
        <taxon>Bacteria</taxon>
        <taxon>Bacillati</taxon>
        <taxon>Actinomycetota</taxon>
        <taxon>Actinomycetes</taxon>
        <taxon>Mycobacteriales</taxon>
        <taxon>Mycobacteriaceae</taxon>
        <taxon>Mycobacterium</taxon>
        <taxon>Mycobacterium tuberculosis complex</taxon>
    </lineage>
</organism>
<sequence>MINDLRTVPAALDRLVRQLPDHTALIAEDRRFTSTELRDAVYGAAAALIALGVEPADRVAIWSPNTWHWVVACLAIHHAGAAVVPLNTRYTATEATDILDRAGAPVLFAAGLFLGADRAAGLDRAALPALRHVVRVPVEADDGTWDEFIATGAGALDAVAARAAAVAPQDVSDILFTSGTTGRSKGVLCAHRQSLSASASWAANGKITSDDRYLCINPFFHNFGYKAGILACLQTGATLIPHVTFDPLHALRAIERHRITVLPGPPTIYQSLLDHPARKDFDLSSLRFAVTGAATVPVVLVERMQSELDIDIVLTAYGLTEANGMGTMCRPEDDAVTVATTCGRPFADFELRIADDGEVLLRGPNVMVGYLDDTEATAAAIDADGWLHTGDIGAVDQAGNLRITDRLKDMYICGGFNVYPAEVEQVLARMDGVADAAVIGVPDQRLGEVGRAFVVARPGTGLDEASVIAYTREHLANFKTPRSVRFVDVLPRNAAGKVSKPQLRELG</sequence>
<evidence type="ECO:0000250" key="1"/>
<evidence type="ECO:0000269" key="2">
    <source>
    </source>
</evidence>
<evidence type="ECO:0000303" key="3">
    <source>
    </source>
</evidence>
<evidence type="ECO:0000305" key="4"/>
<evidence type="ECO:0000312" key="5">
    <source>
        <dbReference type="EMBL" id="AFN51579.1"/>
    </source>
</evidence>
<evidence type="ECO:0000312" key="6">
    <source>
        <dbReference type="EMBL" id="CCP46383.1"/>
    </source>
</evidence>
<evidence type="ECO:0000312" key="7">
    <source>
        <dbReference type="EMBL" id="KBJ24629.1"/>
    </source>
</evidence>
<feature type="chain" id="PRO_0000430639" description="3-[(3aS,4S,7aS)-7a-methyl-1,5-dioxo-octahydro-1H-inden-4-yl]propanoyl:CoA ligase">
    <location>
        <begin position="1"/>
        <end position="507"/>
    </location>
</feature>
<feature type="binding site" evidence="1">
    <location>
        <begin position="177"/>
        <end position="185"/>
    </location>
    <ligand>
        <name>ATP</name>
        <dbReference type="ChEBI" id="CHEBI:30616"/>
    </ligand>
</feature>
<feature type="binding site" evidence="1">
    <location>
        <position position="391"/>
    </location>
    <ligand>
        <name>ATP</name>
        <dbReference type="ChEBI" id="CHEBI:30616"/>
    </ligand>
</feature>
<feature type="binding site" evidence="1">
    <location>
        <position position="406"/>
    </location>
    <ligand>
        <name>ATP</name>
        <dbReference type="ChEBI" id="CHEBI:30616"/>
    </ligand>
</feature>
<feature type="binding site" evidence="1">
    <location>
        <position position="497"/>
    </location>
    <ligand>
        <name>ATP</name>
        <dbReference type="ChEBI" id="CHEBI:30616"/>
    </ligand>
</feature>
<name>FAD3_MYCTU</name>
<proteinExistence type="evidence at protein level"/>
<keyword id="KW-0067">ATP-binding</keyword>
<keyword id="KW-0153">Cholesterol metabolism</keyword>
<keyword id="KW-0436">Ligase</keyword>
<keyword id="KW-0443">Lipid metabolism</keyword>
<keyword id="KW-0547">Nucleotide-binding</keyword>
<keyword id="KW-1185">Reference proteome</keyword>
<keyword id="KW-0753">Steroid metabolism</keyword>
<keyword id="KW-1207">Sterol metabolism</keyword>
<reference key="1">
    <citation type="journal article" date="1998" name="Nature">
        <title>Deciphering the biology of Mycobacterium tuberculosis from the complete genome sequence.</title>
        <authorList>
            <person name="Cole S.T."/>
            <person name="Brosch R."/>
            <person name="Parkhill J."/>
            <person name="Garnier T."/>
            <person name="Churcher C.M."/>
            <person name="Harris D.E."/>
            <person name="Gordon S.V."/>
            <person name="Eiglmeier K."/>
            <person name="Gas S."/>
            <person name="Barry C.E. III"/>
            <person name="Tekaia F."/>
            <person name="Badcock K."/>
            <person name="Basham D."/>
            <person name="Brown D."/>
            <person name="Chillingworth T."/>
            <person name="Connor R."/>
            <person name="Davies R.M."/>
            <person name="Devlin K."/>
            <person name="Feltwell T."/>
            <person name="Gentles S."/>
            <person name="Hamlin N."/>
            <person name="Holroyd S."/>
            <person name="Hornsby T."/>
            <person name="Jagels K."/>
            <person name="Krogh A."/>
            <person name="McLean J."/>
            <person name="Moule S."/>
            <person name="Murphy L.D."/>
            <person name="Oliver S."/>
            <person name="Osborne J."/>
            <person name="Quail M.A."/>
            <person name="Rajandream M.A."/>
            <person name="Rogers J."/>
            <person name="Rutter S."/>
            <person name="Seeger K."/>
            <person name="Skelton S."/>
            <person name="Squares S."/>
            <person name="Squares R."/>
            <person name="Sulston J.E."/>
            <person name="Taylor K."/>
            <person name="Whitehead S."/>
            <person name="Barrell B.G."/>
        </authorList>
    </citation>
    <scope>NUCLEOTIDE SEQUENCE [LARGE SCALE GENOMIC DNA]</scope>
    <source>
        <strain>ATCC 25618 / H37Rv</strain>
    </source>
</reference>
<reference key="2">
    <citation type="journal article" date="2002" name="Microbiology">
        <title>Re-annotation of the genome sequence of Mycobacterium tuberculosis H37Rv.</title>
        <authorList>
            <person name="Camus J.-C."/>
            <person name="Pryor M.J."/>
            <person name="Medigue C."/>
            <person name="Cole S.T."/>
        </authorList>
    </citation>
    <scope>SEQUENCE REVISION</scope>
    <source>
        <strain>ATCC 25618 / H37Rv</strain>
    </source>
</reference>
<reference key="3">
    <citation type="submission" date="2013-11" db="EMBL/GenBank/DDBJ databases">
        <title>The genome sequence of Mycobacterium tuberculosis H37Rv.</title>
        <authorList>
            <consortium name="The Broad Institute Genome Sequencing Platform"/>
            <person name="Galagan J."/>
            <person name="Kreiswirth B."/>
            <person name="Dobos K."/>
            <person name="Fortune S."/>
            <person name="Fitzgerald M."/>
            <person name="Young S.K."/>
            <person name="Zeng Q."/>
            <person name="Gargeya S."/>
            <person name="Abouelleil A."/>
            <person name="Alvarado L."/>
            <person name="Berlin A.M."/>
            <person name="Chapman S.B."/>
            <person name="Gainer-Dewar J."/>
            <person name="Goldberg J."/>
            <person name="Gnerre S."/>
            <person name="Griggs A."/>
            <person name="Gujja S."/>
            <person name="Hansen M."/>
            <person name="Howarth C."/>
            <person name="Imamovic A."/>
            <person name="Larimer J."/>
            <person name="McCowan C."/>
            <person name="Murphy C."/>
            <person name="Pearson M."/>
            <person name="Poon T."/>
            <person name="Priest M."/>
            <person name="Roberts A."/>
            <person name="Saif S."/>
            <person name="Shea T."/>
            <person name="Sykes S."/>
            <person name="Wortman J."/>
            <person name="Nusbaum C."/>
            <person name="Birren B."/>
        </authorList>
    </citation>
    <scope>NUCLEOTIDE SEQUENCE [LARGE SCALE GENOMIC DNA]</scope>
    <source>
        <strain>ATCC 25618 / H37Rv</strain>
    </source>
</reference>
<reference key="4">
    <citation type="submission" date="2014-04" db="EMBL/GenBank/DDBJ databases">
        <title>The genome sequence of Mycobacterium tuberculosis H37Rv.</title>
        <authorList>
            <consortium name="The Broad Institute Genomics Platform"/>
            <consortium name="The Broad Institute Genome Sequencing Center for Infectious Disease"/>
            <person name="Earl A.M."/>
            <person name="Kreiswirth B."/>
            <person name="Gomez J."/>
            <person name="Victor T."/>
            <person name="Desjardins C."/>
            <person name="Abeel T."/>
            <person name="Young S."/>
            <person name="Zeng Q."/>
            <person name="Gargeya S."/>
            <person name="Abouelleil A."/>
            <person name="Alvarado L."/>
            <person name="Chapman S.B."/>
            <person name="Gainer-Dewar J."/>
            <person name="Goldberg J."/>
            <person name="Griggs A."/>
            <person name="Gujja S."/>
            <person name="Hansen M."/>
            <person name="Howarth C."/>
            <person name="Imamovic A."/>
            <person name="Larimer J."/>
            <person name="Murphy C."/>
            <person name="Naylor J."/>
            <person name="Pearson M."/>
            <person name="Poon T.W."/>
            <person name="Priest M."/>
            <person name="Roberts A."/>
            <person name="Saif S."/>
            <person name="Shea T."/>
            <person name="Sykes S."/>
            <person name="Wortman J."/>
            <person name="Nusbaum C."/>
            <person name="Birren B."/>
        </authorList>
    </citation>
    <scope>NUCLEOTIDE SEQUENCE [LARGE SCALE GENOMIC DNA]</scope>
    <source>
        <strain>ATCC 25618 / H37Rv</strain>
    </source>
</reference>
<reference key="5">
    <citation type="journal article" date="2011" name="Mol. Cell. Proteomics">
        <title>Proteogenomic analysis of Mycobacterium tuberculosis by high resolution mass spectrometry.</title>
        <authorList>
            <person name="Kelkar D.S."/>
            <person name="Kumar D."/>
            <person name="Kumar P."/>
            <person name="Balakrishnan L."/>
            <person name="Muthusamy B."/>
            <person name="Yadav A.K."/>
            <person name="Shrivastava P."/>
            <person name="Marimuthu A."/>
            <person name="Anand S."/>
            <person name="Sundaram H."/>
            <person name="Kingsbury R."/>
            <person name="Harsha H.C."/>
            <person name="Nair B."/>
            <person name="Prasad T.S."/>
            <person name="Chauhan D.S."/>
            <person name="Katoch K."/>
            <person name="Katoch V.M."/>
            <person name="Kumar P."/>
            <person name="Chaerkady R."/>
            <person name="Ramachandran S."/>
            <person name="Dash D."/>
            <person name="Pandey A."/>
        </authorList>
    </citation>
    <scope>IDENTIFICATION BY MASS SPECTROMETRY [LARGE SCALE ANALYSIS]</scope>
    <source>
        <strain>ATCC 25618 / H37Rv</strain>
    </source>
</reference>
<reference key="6">
    <citation type="journal article" date="2013" name="Mol. Microbiol.">
        <title>FadD3 is an acyl-CoA synthetase that initiates catabolism of cholesterol rings C and D in actinobacteria.</title>
        <authorList>
            <person name="Casabon I."/>
            <person name="Crowe A.M."/>
            <person name="Liu J."/>
            <person name="Eltis L.D."/>
        </authorList>
    </citation>
    <scope>FUNCTION</scope>
    <scope>CATALYTIC ACTIVITY</scope>
    <scope>SUBSTRATE SPECIFICITY</scope>
    <scope>BIOPHYSICOCHEMICAL PROPERTIES</scope>
</reference>
<protein>
    <recommendedName>
        <fullName evidence="3">3-[(3aS,4S,7aS)-7a-methyl-1,5-dioxo-octahydro-1H-inden-4-yl]propanoyl:CoA ligase</fullName>
        <shortName evidence="3">HIP:CoA ligase</shortName>
        <ecNumber evidence="2">6.2.1.41</ecNumber>
    </recommendedName>
</protein>
<dbReference type="EC" id="6.2.1.41" evidence="2"/>
<dbReference type="EMBL" id="AL123456">
    <property type="protein sequence ID" value="CCP46383.1"/>
    <property type="molecule type" value="Genomic_DNA"/>
</dbReference>
<dbReference type="EMBL" id="CP003248">
    <property type="protein sequence ID" value="AFN51579.1"/>
    <property type="molecule type" value="Genomic_DNA"/>
</dbReference>
<dbReference type="EMBL" id="JLDD01000048">
    <property type="protein sequence ID" value="KBJ24629.1"/>
    <property type="molecule type" value="Genomic_DNA"/>
</dbReference>
<dbReference type="RefSeq" id="NP_218078.1">
    <property type="nucleotide sequence ID" value="NC_000962.3"/>
</dbReference>
<dbReference type="RefSeq" id="WP_003900098.1">
    <property type="nucleotide sequence ID" value="NZ_NVQJ01000014.1"/>
</dbReference>
<dbReference type="SMR" id="P96843"/>
<dbReference type="FunCoup" id="P96843">
    <property type="interactions" value="30"/>
</dbReference>
<dbReference type="STRING" id="83332.Rv3561"/>
<dbReference type="SwissLipids" id="SLP:000000991"/>
<dbReference type="PaxDb" id="83332-Rv3561"/>
<dbReference type="DNASU" id="887244"/>
<dbReference type="GeneID" id="887244"/>
<dbReference type="KEGG" id="mtu:Rv3561"/>
<dbReference type="KEGG" id="mtv:RVBD_3561"/>
<dbReference type="TubercuList" id="Rv3561"/>
<dbReference type="eggNOG" id="COG0318">
    <property type="taxonomic scope" value="Bacteria"/>
</dbReference>
<dbReference type="InParanoid" id="P96843"/>
<dbReference type="OrthoDB" id="9803968at2"/>
<dbReference type="PhylomeDB" id="P96843"/>
<dbReference type="BioCyc" id="MetaCyc:G185E-7838-MONOMER"/>
<dbReference type="Proteomes" id="UP000001584">
    <property type="component" value="Chromosome"/>
</dbReference>
<dbReference type="GO" id="GO:0005524">
    <property type="term" value="F:ATP binding"/>
    <property type="evidence" value="ECO:0007669"/>
    <property type="project" value="UniProtKB-KW"/>
</dbReference>
<dbReference type="GO" id="GO:0016405">
    <property type="term" value="F:CoA-ligase activity"/>
    <property type="evidence" value="ECO:0000318"/>
    <property type="project" value="GO_Central"/>
</dbReference>
<dbReference type="GO" id="GO:0008203">
    <property type="term" value="P:cholesterol metabolic process"/>
    <property type="evidence" value="ECO:0007669"/>
    <property type="project" value="UniProtKB-KW"/>
</dbReference>
<dbReference type="CDD" id="cd17638">
    <property type="entry name" value="FadD3"/>
    <property type="match status" value="1"/>
</dbReference>
<dbReference type="Gene3D" id="3.30.300.30">
    <property type="match status" value="1"/>
</dbReference>
<dbReference type="Gene3D" id="3.40.50.12780">
    <property type="entry name" value="N-terminal domain of ligase-like"/>
    <property type="match status" value="1"/>
</dbReference>
<dbReference type="InterPro" id="IPR025110">
    <property type="entry name" value="AMP-bd_C"/>
</dbReference>
<dbReference type="InterPro" id="IPR045851">
    <property type="entry name" value="AMP-bd_C_sf"/>
</dbReference>
<dbReference type="InterPro" id="IPR020845">
    <property type="entry name" value="AMP-binding_CS"/>
</dbReference>
<dbReference type="InterPro" id="IPR000873">
    <property type="entry name" value="AMP-dep_synth/lig_dom"/>
</dbReference>
<dbReference type="InterPro" id="IPR042099">
    <property type="entry name" value="ANL_N_sf"/>
</dbReference>
<dbReference type="NCBIfam" id="NF005801">
    <property type="entry name" value="PRK07656.1"/>
    <property type="match status" value="1"/>
</dbReference>
<dbReference type="PANTHER" id="PTHR43201">
    <property type="entry name" value="ACYL-COA SYNTHETASE"/>
    <property type="match status" value="1"/>
</dbReference>
<dbReference type="PANTHER" id="PTHR43201:SF5">
    <property type="entry name" value="MEDIUM-CHAIN ACYL-COA LIGASE ACSF2, MITOCHONDRIAL"/>
    <property type="match status" value="1"/>
</dbReference>
<dbReference type="Pfam" id="PF00501">
    <property type="entry name" value="AMP-binding"/>
    <property type="match status" value="1"/>
</dbReference>
<dbReference type="Pfam" id="PF13193">
    <property type="entry name" value="AMP-binding_C"/>
    <property type="match status" value="1"/>
</dbReference>
<dbReference type="SUPFAM" id="SSF56801">
    <property type="entry name" value="Acetyl-CoA synthetase-like"/>
    <property type="match status" value="1"/>
</dbReference>
<dbReference type="PROSITE" id="PS00455">
    <property type="entry name" value="AMP_BINDING"/>
    <property type="match status" value="1"/>
</dbReference>
<accession>P96843</accession>
<accession>F2GJQ7</accession>
<accession>I6XHJ7</accession>
<comment type="function">
    <text evidence="2">Involved in the catabolism of the rings C and D of cholesterol. Catalyzes the ATP-dependent CoA thioesterification of 3aalpha-H-4alpha(3'-propanoate)-7abeta-methylhexahydro-1,5-indanedione (HIP) to yield HIP-CoA. It can also use the hydroxylated analogs of HIP, 5alpha-OH HIP and 1beta-OH HIP. It requires that the side chain at C17 is completely removed.</text>
</comment>
<comment type="catalytic activity">
    <reaction evidence="2">
        <text>3-[(3aS,4S,7aS)-7a-methyl-1,5-dioxo-octahydro-1H-inden-4-yl]propanoate + ATP + CoA = 3-[(3aS,4S,7aS)-7a-methyl-1,5-dioxo-octahydro-1H-inden-4-yl]propanoyl-CoA + AMP + diphosphate</text>
        <dbReference type="Rhea" id="RHEA:41640"/>
        <dbReference type="ChEBI" id="CHEBI:30616"/>
        <dbReference type="ChEBI" id="CHEBI:33019"/>
        <dbReference type="ChEBI" id="CHEBI:57287"/>
        <dbReference type="ChEBI" id="CHEBI:63692"/>
        <dbReference type="ChEBI" id="CHEBI:78357"/>
        <dbReference type="ChEBI" id="CHEBI:456215"/>
        <dbReference type="EC" id="6.2.1.41"/>
    </reaction>
    <physiologicalReaction direction="left-to-right" evidence="2">
        <dbReference type="Rhea" id="RHEA:41641"/>
    </physiologicalReaction>
</comment>
<comment type="catalytic activity">
    <reaction evidence="2">
        <text>5-hydroxy-3-[(3aS,4S,5R,7aS)-7a-methyl-1,5-dioxo-octahydro-1H-inden-4-yl]propanoate + ATP + CoA = 3-[(3aS,4S,5R,7aS)-5-hydroxy-7a-methyl-1-oxo-octahydro-1H-inden-4-yl]propanoyl-CoA + AMP + diphosphate</text>
        <dbReference type="Rhea" id="RHEA:43832"/>
        <dbReference type="ChEBI" id="CHEBI:30616"/>
        <dbReference type="ChEBI" id="CHEBI:33019"/>
        <dbReference type="ChEBI" id="CHEBI:57287"/>
        <dbReference type="ChEBI" id="CHEBI:83736"/>
        <dbReference type="ChEBI" id="CHEBI:83738"/>
        <dbReference type="ChEBI" id="CHEBI:456215"/>
    </reaction>
    <physiologicalReaction direction="left-to-right" evidence="2">
        <dbReference type="Rhea" id="RHEA:43833"/>
    </physiologicalReaction>
</comment>
<comment type="biophysicochemical properties">
    <kinetics>
        <KM evidence="2">9.8 uM for HIP (at pH 7.3 and 22 degrees Celsius)</KM>
        <KM evidence="2">3000 uM for 5alpha-OH HIP (at pH 7.3 and 22 degrees Celsius)</KM>
        <KM evidence="2">110 uM for CoASH (at pH 7.3 and 22 degrees Celsius)</KM>
        <text evidence="2">kcat is 7.1 sec(-1) for ligase activity with HIP. kcat is 7.5 sec(-1) for ligase activity with CoASH (at pH 7.3 and 22 degrees Celsius). kcat is 13 sec(-1) for ligase activity with 5alpha-OH HIP (at pH 7.3 and 22 degrees Celsius).</text>
    </kinetics>
</comment>
<comment type="similarity">
    <text evidence="4">Belongs to the ATP-dependent AMP-binding enzyme family.</text>
</comment>
<gene>
    <name evidence="3" type="primary">fadD3</name>
    <name evidence="6" type="ordered locus">Rv3561</name>
    <name evidence="7" type="ORF">P425_03703</name>
    <name evidence="5" type="ORF">RVBD_3561</name>
</gene>